<organism>
    <name type="scientific">Arabidopsis thaliana</name>
    <name type="common">Mouse-ear cress</name>
    <dbReference type="NCBI Taxonomy" id="3702"/>
    <lineage>
        <taxon>Eukaryota</taxon>
        <taxon>Viridiplantae</taxon>
        <taxon>Streptophyta</taxon>
        <taxon>Embryophyta</taxon>
        <taxon>Tracheophyta</taxon>
        <taxon>Spermatophyta</taxon>
        <taxon>Magnoliopsida</taxon>
        <taxon>eudicotyledons</taxon>
        <taxon>Gunneridae</taxon>
        <taxon>Pentapetalae</taxon>
        <taxon>rosids</taxon>
        <taxon>malvids</taxon>
        <taxon>Brassicales</taxon>
        <taxon>Brassicaceae</taxon>
        <taxon>Camelineae</taxon>
        <taxon>Arabidopsis</taxon>
    </lineage>
</organism>
<dbReference type="EMBL" id="AC083835">
    <property type="protein sequence ID" value="AAG50629.1"/>
    <property type="status" value="ALT_INIT"/>
    <property type="molecule type" value="Genomic_DNA"/>
</dbReference>
<dbReference type="EMBL" id="CP002684">
    <property type="protein sequence ID" value="AEE32129.1"/>
    <property type="molecule type" value="Genomic_DNA"/>
</dbReference>
<dbReference type="EMBL" id="CP002684">
    <property type="protein sequence ID" value="ANM59960.1"/>
    <property type="molecule type" value="Genomic_DNA"/>
</dbReference>
<dbReference type="EMBL" id="BT024691">
    <property type="protein sequence ID" value="ABD57516.1"/>
    <property type="molecule type" value="mRNA"/>
</dbReference>
<dbReference type="EMBL" id="AY086838">
    <property type="protein sequence ID" value="AAM63886.1"/>
    <property type="molecule type" value="mRNA"/>
</dbReference>
<dbReference type="EMBL" id="Z27045">
    <property type="protein sequence ID" value="CAA81574.1"/>
    <property type="molecule type" value="mRNA"/>
</dbReference>
<dbReference type="EMBL" id="AF003094">
    <property type="protein sequence ID" value="AAC49767.1"/>
    <property type="molecule type" value="mRNA"/>
</dbReference>
<dbReference type="PIR" id="H96511">
    <property type="entry name" value="H96511"/>
</dbReference>
<dbReference type="RefSeq" id="NP_001322276.1">
    <property type="nucleotide sequence ID" value="NM_001333265.1"/>
</dbReference>
<dbReference type="RefSeq" id="NP_564496.1">
    <property type="nucleotide sequence ID" value="NM_103607.4"/>
</dbReference>
<dbReference type="SMR" id="Q8LC30"/>
<dbReference type="BioGRID" id="26342">
    <property type="interactions" value="3"/>
</dbReference>
<dbReference type="FunCoup" id="Q8LC30">
    <property type="interactions" value="7"/>
</dbReference>
<dbReference type="STRING" id="3702.Q8LC30"/>
<dbReference type="PaxDb" id="3702-AT1G46768.1"/>
<dbReference type="ProteomicsDB" id="225920"/>
<dbReference type="EnsemblPlants" id="AT1G46768.1">
    <property type="protein sequence ID" value="AT1G46768.1"/>
    <property type="gene ID" value="AT1G46768"/>
</dbReference>
<dbReference type="EnsemblPlants" id="AT1G46768.2">
    <property type="protein sequence ID" value="AT1G46768.2"/>
    <property type="gene ID" value="AT1G46768"/>
</dbReference>
<dbReference type="GeneID" id="841117"/>
<dbReference type="Gramene" id="AT1G46768.1">
    <property type="protein sequence ID" value="AT1G46768.1"/>
    <property type="gene ID" value="AT1G46768"/>
</dbReference>
<dbReference type="Gramene" id="AT1G46768.2">
    <property type="protein sequence ID" value="AT1G46768.2"/>
    <property type="gene ID" value="AT1G46768"/>
</dbReference>
<dbReference type="KEGG" id="ath:AT1G46768"/>
<dbReference type="Araport" id="AT1G46768"/>
<dbReference type="TAIR" id="AT1G46768">
    <property type="gene designation" value="RAP2.1"/>
</dbReference>
<dbReference type="eggNOG" id="ENOG502S0BY">
    <property type="taxonomic scope" value="Eukaryota"/>
</dbReference>
<dbReference type="HOGENOM" id="CLU_063331_7_2_1"/>
<dbReference type="InParanoid" id="Q8LC30"/>
<dbReference type="OMA" id="KSTRMMM"/>
<dbReference type="PhylomeDB" id="Q8LC30"/>
<dbReference type="PRO" id="PR:Q8LC30"/>
<dbReference type="Proteomes" id="UP000006548">
    <property type="component" value="Chromosome 1"/>
</dbReference>
<dbReference type="ExpressionAtlas" id="Q8LC30">
    <property type="expression patterns" value="baseline and differential"/>
</dbReference>
<dbReference type="GO" id="GO:0005634">
    <property type="term" value="C:nucleus"/>
    <property type="evidence" value="ECO:0007669"/>
    <property type="project" value="UniProtKB-SubCell"/>
</dbReference>
<dbReference type="GO" id="GO:0003677">
    <property type="term" value="F:DNA binding"/>
    <property type="evidence" value="ECO:0007669"/>
    <property type="project" value="UniProtKB-KW"/>
</dbReference>
<dbReference type="GO" id="GO:0003700">
    <property type="term" value="F:DNA-binding transcription factor activity"/>
    <property type="evidence" value="ECO:0000250"/>
    <property type="project" value="TAIR"/>
</dbReference>
<dbReference type="GO" id="GO:0009873">
    <property type="term" value="P:ethylene-activated signaling pathway"/>
    <property type="evidence" value="ECO:0007669"/>
    <property type="project" value="UniProtKB-KW"/>
</dbReference>
<dbReference type="GO" id="GO:0045893">
    <property type="term" value="P:positive regulation of DNA-templated transcription"/>
    <property type="evidence" value="ECO:0000314"/>
    <property type="project" value="TAIR"/>
</dbReference>
<dbReference type="GO" id="GO:0009409">
    <property type="term" value="P:response to cold"/>
    <property type="evidence" value="ECO:0000315"/>
    <property type="project" value="TAIR"/>
</dbReference>
<dbReference type="GO" id="GO:0009414">
    <property type="term" value="P:response to water deprivation"/>
    <property type="evidence" value="ECO:0000315"/>
    <property type="project" value="TAIR"/>
</dbReference>
<dbReference type="CDD" id="cd00018">
    <property type="entry name" value="AP2"/>
    <property type="match status" value="1"/>
</dbReference>
<dbReference type="FunFam" id="3.30.730.10:FF:000001">
    <property type="entry name" value="Ethylene-responsive transcription factor 2"/>
    <property type="match status" value="1"/>
</dbReference>
<dbReference type="Gene3D" id="3.30.730.10">
    <property type="entry name" value="AP2/ERF domain"/>
    <property type="match status" value="1"/>
</dbReference>
<dbReference type="InterPro" id="IPR001471">
    <property type="entry name" value="AP2/ERF_dom"/>
</dbReference>
<dbReference type="InterPro" id="IPR036955">
    <property type="entry name" value="AP2/ERF_dom_sf"/>
</dbReference>
<dbReference type="InterPro" id="IPR016177">
    <property type="entry name" value="DNA-bd_dom_sf"/>
</dbReference>
<dbReference type="PANTHER" id="PTHR31729">
    <property type="entry name" value="ETHYLENE-RESPONSIVE TRANSCRIPTION FACTOR RAP2-1-RELATED"/>
    <property type="match status" value="1"/>
</dbReference>
<dbReference type="PANTHER" id="PTHR31729:SF2">
    <property type="entry name" value="ETHYLENE-RESPONSIVE TRANSCRIPTION FACTOR RAP2-1-RELATED"/>
    <property type="match status" value="1"/>
</dbReference>
<dbReference type="Pfam" id="PF00847">
    <property type="entry name" value="AP2"/>
    <property type="match status" value="1"/>
</dbReference>
<dbReference type="PRINTS" id="PR00367">
    <property type="entry name" value="ETHRSPELEMNT"/>
</dbReference>
<dbReference type="SMART" id="SM00380">
    <property type="entry name" value="AP2"/>
    <property type="match status" value="1"/>
</dbReference>
<dbReference type="SUPFAM" id="SSF54171">
    <property type="entry name" value="DNA-binding domain"/>
    <property type="match status" value="1"/>
</dbReference>
<dbReference type="PROSITE" id="PS51032">
    <property type="entry name" value="AP2_ERF"/>
    <property type="match status" value="1"/>
</dbReference>
<name>RAP21_ARATH</name>
<reference key="1">
    <citation type="journal article" date="2000" name="Nature">
        <title>Sequence and analysis of chromosome 1 of the plant Arabidopsis thaliana.</title>
        <authorList>
            <person name="Theologis A."/>
            <person name="Ecker J.R."/>
            <person name="Palm C.J."/>
            <person name="Federspiel N.A."/>
            <person name="Kaul S."/>
            <person name="White O."/>
            <person name="Alonso J."/>
            <person name="Altafi H."/>
            <person name="Araujo R."/>
            <person name="Bowman C.L."/>
            <person name="Brooks S.Y."/>
            <person name="Buehler E."/>
            <person name="Chan A."/>
            <person name="Chao Q."/>
            <person name="Chen H."/>
            <person name="Cheuk R.F."/>
            <person name="Chin C.W."/>
            <person name="Chung M.K."/>
            <person name="Conn L."/>
            <person name="Conway A.B."/>
            <person name="Conway A.R."/>
            <person name="Creasy T.H."/>
            <person name="Dewar K."/>
            <person name="Dunn P."/>
            <person name="Etgu P."/>
            <person name="Feldblyum T.V."/>
            <person name="Feng J.-D."/>
            <person name="Fong B."/>
            <person name="Fujii C.Y."/>
            <person name="Gill J.E."/>
            <person name="Goldsmith A.D."/>
            <person name="Haas B."/>
            <person name="Hansen N.F."/>
            <person name="Hughes B."/>
            <person name="Huizar L."/>
            <person name="Hunter J.L."/>
            <person name="Jenkins J."/>
            <person name="Johnson-Hopson C."/>
            <person name="Khan S."/>
            <person name="Khaykin E."/>
            <person name="Kim C.J."/>
            <person name="Koo H.L."/>
            <person name="Kremenetskaia I."/>
            <person name="Kurtz D.B."/>
            <person name="Kwan A."/>
            <person name="Lam B."/>
            <person name="Langin-Hooper S."/>
            <person name="Lee A."/>
            <person name="Lee J.M."/>
            <person name="Lenz C.A."/>
            <person name="Li J.H."/>
            <person name="Li Y.-P."/>
            <person name="Lin X."/>
            <person name="Liu S.X."/>
            <person name="Liu Z.A."/>
            <person name="Luros J.S."/>
            <person name="Maiti R."/>
            <person name="Marziali A."/>
            <person name="Militscher J."/>
            <person name="Miranda M."/>
            <person name="Nguyen M."/>
            <person name="Nierman W.C."/>
            <person name="Osborne B.I."/>
            <person name="Pai G."/>
            <person name="Peterson J."/>
            <person name="Pham P.K."/>
            <person name="Rizzo M."/>
            <person name="Rooney T."/>
            <person name="Rowley D."/>
            <person name="Sakano H."/>
            <person name="Salzberg S.L."/>
            <person name="Schwartz J.R."/>
            <person name="Shinn P."/>
            <person name="Southwick A.M."/>
            <person name="Sun H."/>
            <person name="Tallon L.J."/>
            <person name="Tambunga G."/>
            <person name="Toriumi M.J."/>
            <person name="Town C.D."/>
            <person name="Utterback T."/>
            <person name="Van Aken S."/>
            <person name="Vaysberg M."/>
            <person name="Vysotskaia V.S."/>
            <person name="Walker M."/>
            <person name="Wu D."/>
            <person name="Yu G."/>
            <person name="Fraser C.M."/>
            <person name="Venter J.C."/>
            <person name="Davis R.W."/>
        </authorList>
    </citation>
    <scope>NUCLEOTIDE SEQUENCE [LARGE SCALE GENOMIC DNA]</scope>
    <source>
        <strain>cv. Columbia</strain>
    </source>
</reference>
<reference key="2">
    <citation type="journal article" date="2017" name="Plant J.">
        <title>Araport11: a complete reannotation of the Arabidopsis thaliana reference genome.</title>
        <authorList>
            <person name="Cheng C.Y."/>
            <person name="Krishnakumar V."/>
            <person name="Chan A.P."/>
            <person name="Thibaud-Nissen F."/>
            <person name="Schobel S."/>
            <person name="Town C.D."/>
        </authorList>
    </citation>
    <scope>GENOME REANNOTATION</scope>
    <source>
        <strain>cv. Columbia</strain>
    </source>
</reference>
<reference key="3">
    <citation type="submission" date="2006-02" db="EMBL/GenBank/DDBJ databases">
        <title>Arabidopsis ORF clones.</title>
        <authorList>
            <person name="Kim C.J."/>
            <person name="Chen H."/>
            <person name="Shinn P."/>
            <person name="Ecker J.R."/>
        </authorList>
    </citation>
    <scope>NUCLEOTIDE SEQUENCE [LARGE SCALE MRNA]</scope>
    <source>
        <strain>cv. Columbia</strain>
    </source>
</reference>
<reference key="4">
    <citation type="submission" date="2002-03" db="EMBL/GenBank/DDBJ databases">
        <title>Full-length cDNA from Arabidopsis thaliana.</title>
        <authorList>
            <person name="Brover V.V."/>
            <person name="Troukhan M.E."/>
            <person name="Alexandrov N.A."/>
            <person name="Lu Y.-P."/>
            <person name="Flavell R.B."/>
            <person name="Feldmann K.A."/>
        </authorList>
    </citation>
    <scope>NUCLEOTIDE SEQUENCE [LARGE SCALE MRNA]</scope>
</reference>
<reference key="5">
    <citation type="submission" date="1993-10" db="EMBL/GenBank/DDBJ databases">
        <title>The Arabidopsis thaliana transcribed genome: the GDR cDNA program.</title>
        <authorList>
            <person name="Raynal M."/>
            <person name="Grellet F."/>
            <person name="Laudie M."/>
            <person name="Meyer Y."/>
            <person name="Cooke R."/>
            <person name="Delseny M."/>
        </authorList>
    </citation>
    <scope>NUCLEOTIDE SEQUENCE [MRNA] OF 6-140</scope>
    <source>
        <strain>cv. Columbia</strain>
        <tissue>Seed</tissue>
    </source>
</reference>
<reference key="6">
    <citation type="journal article" date="1997" name="Proc. Natl. Acad. Sci. U.S.A.">
        <title>The AP2 domain of APETALA2 defines a large new family of DNA binding proteins in Arabidopsis.</title>
        <authorList>
            <person name="Okamuro J.K."/>
            <person name="Caster B."/>
            <person name="Villarroel R."/>
            <person name="Van Montagu M."/>
            <person name="Jofuku K.D."/>
        </authorList>
    </citation>
    <scope>NUCLEOTIDE SEQUENCE [MRNA] OF 6-153</scope>
    <scope>TISSUE SPECIFICITY</scope>
</reference>
<reference key="7">
    <citation type="journal article" date="2006" name="Plant Physiol.">
        <title>Genome-wide analysis of the ERF gene family in Arabidopsis and rice.</title>
        <authorList>
            <person name="Nakano T."/>
            <person name="Suzuki K."/>
            <person name="Fujimura T."/>
            <person name="Shinshi H."/>
        </authorList>
    </citation>
    <scope>GENE FAMILY</scope>
    <scope>NOMENCLATURE</scope>
</reference>
<proteinExistence type="evidence at transcript level"/>
<accession>Q8LC30</accession>
<accession>O23103</accession>
<accession>Q42165</accession>
<accession>Q9C630</accession>
<keyword id="KW-0010">Activator</keyword>
<keyword id="KW-0238">DNA-binding</keyword>
<keyword id="KW-0936">Ethylene signaling pathway</keyword>
<keyword id="KW-0539">Nucleus</keyword>
<keyword id="KW-1185">Reference proteome</keyword>
<keyword id="KW-0804">Transcription</keyword>
<keyword id="KW-0805">Transcription regulation</keyword>
<evidence type="ECO:0000250" key="1"/>
<evidence type="ECO:0000255" key="2">
    <source>
        <dbReference type="PROSITE-ProRule" id="PRU00366"/>
    </source>
</evidence>
<evidence type="ECO:0000256" key="3">
    <source>
        <dbReference type="SAM" id="MobiDB-lite"/>
    </source>
</evidence>
<evidence type="ECO:0000269" key="4">
    <source>
    </source>
</evidence>
<evidence type="ECO:0000305" key="5"/>
<protein>
    <recommendedName>
        <fullName>Ethylene-responsive transcription factor RAP2-1</fullName>
    </recommendedName>
    <alternativeName>
        <fullName>Protein RELATED TO APETALA2 1</fullName>
    </alternativeName>
</protein>
<gene>
    <name type="primary">RAP2-1</name>
    <name type="synonym">ERF006</name>
    <name type="ordered locus">At1g46768</name>
    <name type="ORF">F2G19.32</name>
</gene>
<sequence>MEREQEESTMRKRRQPPQEEVPNHVATRKPYRGIRRRKWGKWVAEIREPNKRSRLWLGSYTTDIAAARAYDVAVFYLRGPSARLNFPDLLLQEEDHLSAATTADMPAALIREKAAEVGARVDALLASAAPSMAHSTPPVIKPDLNQIPESGDI</sequence>
<comment type="function">
    <text evidence="1">Probably acts as a transcriptional activator. Binds to the GCC-box pathogenesis-related promoter element. May be involved in the regulation of gene expression by stress factors and by components of stress signal transduction pathways (By similarity).</text>
</comment>
<comment type="subcellular location">
    <subcellularLocation>
        <location evidence="5">Nucleus</location>
    </subcellularLocation>
</comment>
<comment type="tissue specificity">
    <text evidence="4">Expressed at low levels in flowers, leaves, and stems, and at very low levels in roots.</text>
</comment>
<comment type="similarity">
    <text evidence="5">Belongs to the AP2/ERF transcription factor family. ERF subfamily.</text>
</comment>
<comment type="sequence caution" evidence="5">
    <conflict type="erroneous initiation">
        <sequence resource="EMBL-CDS" id="AAG50629"/>
    </conflict>
</comment>
<feature type="chain" id="PRO_0000297932" description="Ethylene-responsive transcription factor RAP2-1">
    <location>
        <begin position="1"/>
        <end position="153"/>
    </location>
</feature>
<feature type="DNA-binding region" description="AP2/ERF" evidence="2">
    <location>
        <begin position="30"/>
        <end position="87"/>
    </location>
</feature>
<feature type="region of interest" description="Disordered" evidence="3">
    <location>
        <begin position="1"/>
        <end position="29"/>
    </location>
</feature>
<feature type="compositionally biased region" description="Basic and acidic residues" evidence="3">
    <location>
        <begin position="1"/>
        <end position="10"/>
    </location>
</feature>
<feature type="sequence conflict" description="In Ref. 5; CAA81574." evidence="5" ref="5">
    <original>A</original>
    <variation>D</variation>
    <location>
        <position position="26"/>
    </location>
</feature>
<feature type="sequence conflict" description="In Ref. 5; CAA81574." evidence="5" ref="5">
    <original>Y</original>
    <variation>H</variation>
    <location>
        <position position="31"/>
    </location>
</feature>
<feature type="sequence conflict" description="In Ref. 5; CAA81574." evidence="5" ref="5">
    <original>G</original>
    <variation>R</variation>
    <location>
        <position position="40"/>
    </location>
</feature>
<feature type="sequence conflict" description="In Ref. 5; CAA81574." evidence="5" ref="5">
    <original>A</original>
    <variation>T</variation>
    <location>
        <position position="82"/>
    </location>
</feature>
<feature type="sequence conflict" description="In Ref. 5; CAA81574." evidence="5" ref="5">
    <original>Q</original>
    <variation>K</variation>
    <location>
        <position position="92"/>
    </location>
</feature>
<feature type="sequence conflict" description="In Ref. 5; CAA81574." evidence="5" ref="5">
    <original>D</original>
    <variation>A</variation>
    <location>
        <position position="95"/>
    </location>
</feature>
<feature type="sequence conflict" description="In Ref. 5; CAA81574." evidence="5" ref="5">
    <original>AATTA</original>
    <variation>GDTSG</variation>
    <location>
        <begin position="99"/>
        <end position="103"/>
    </location>
</feature>
<feature type="sequence conflict" description="In Ref. 5; CAA81574." evidence="5" ref="5">
    <original>A</original>
    <variation>G</variation>
    <location>
        <position position="107"/>
    </location>
</feature>